<proteinExistence type="inferred from homology"/>
<evidence type="ECO:0000250" key="1"/>
<evidence type="ECO:0000305" key="2"/>
<dbReference type="EMBL" id="AP009368">
    <property type="protein sequence ID" value="BAF49978.1"/>
    <property type="molecule type" value="Genomic_DNA"/>
</dbReference>
<dbReference type="RefSeq" id="YP_001123154.1">
    <property type="nucleotide sequence ID" value="NC_009267.1"/>
</dbReference>
<dbReference type="SMR" id="A4QJX0"/>
<dbReference type="GeneID" id="4962370"/>
<dbReference type="GO" id="GO:0009507">
    <property type="term" value="C:chloroplast"/>
    <property type="evidence" value="ECO:0007669"/>
    <property type="project" value="UniProtKB-SubCell"/>
</dbReference>
<dbReference type="GO" id="GO:0015934">
    <property type="term" value="C:large ribosomal subunit"/>
    <property type="evidence" value="ECO:0007669"/>
    <property type="project" value="InterPro"/>
</dbReference>
<dbReference type="GO" id="GO:0019843">
    <property type="term" value="F:rRNA binding"/>
    <property type="evidence" value="ECO:0007669"/>
    <property type="project" value="UniProtKB-UniRule"/>
</dbReference>
<dbReference type="GO" id="GO:0003735">
    <property type="term" value="F:structural constituent of ribosome"/>
    <property type="evidence" value="ECO:0007669"/>
    <property type="project" value="InterPro"/>
</dbReference>
<dbReference type="GO" id="GO:0006412">
    <property type="term" value="P:translation"/>
    <property type="evidence" value="ECO:0007669"/>
    <property type="project" value="UniProtKB-UniRule"/>
</dbReference>
<dbReference type="CDD" id="cd00336">
    <property type="entry name" value="Ribosomal_L22"/>
    <property type="match status" value="1"/>
</dbReference>
<dbReference type="FunFam" id="3.90.470.10:FF:000006">
    <property type="entry name" value="50S ribosomal protein L22, chloroplastic"/>
    <property type="match status" value="1"/>
</dbReference>
<dbReference type="Gene3D" id="3.90.470.10">
    <property type="entry name" value="Ribosomal protein L22/L17"/>
    <property type="match status" value="1"/>
</dbReference>
<dbReference type="HAMAP" id="MF_01331_B">
    <property type="entry name" value="Ribosomal_uL22_B"/>
    <property type="match status" value="1"/>
</dbReference>
<dbReference type="InterPro" id="IPR001063">
    <property type="entry name" value="Ribosomal_uL22"/>
</dbReference>
<dbReference type="InterPro" id="IPR005727">
    <property type="entry name" value="Ribosomal_uL22_bac/chlpt-type"/>
</dbReference>
<dbReference type="InterPro" id="IPR047867">
    <property type="entry name" value="Ribosomal_uL22_bac/org-type"/>
</dbReference>
<dbReference type="InterPro" id="IPR018260">
    <property type="entry name" value="Ribosomal_uL22_CS"/>
</dbReference>
<dbReference type="InterPro" id="IPR036394">
    <property type="entry name" value="Ribosomal_uL22_sf"/>
</dbReference>
<dbReference type="NCBIfam" id="TIGR01044">
    <property type="entry name" value="rplV_bact"/>
    <property type="match status" value="1"/>
</dbReference>
<dbReference type="PANTHER" id="PTHR13501">
    <property type="entry name" value="CHLOROPLAST 50S RIBOSOMAL PROTEIN L22-RELATED"/>
    <property type="match status" value="1"/>
</dbReference>
<dbReference type="PANTHER" id="PTHR13501:SF10">
    <property type="entry name" value="LARGE RIBOSOMAL SUBUNIT PROTEIN UL22M"/>
    <property type="match status" value="1"/>
</dbReference>
<dbReference type="Pfam" id="PF00237">
    <property type="entry name" value="Ribosomal_L22"/>
    <property type="match status" value="1"/>
</dbReference>
<dbReference type="SUPFAM" id="SSF54843">
    <property type="entry name" value="Ribosomal protein L22"/>
    <property type="match status" value="1"/>
</dbReference>
<dbReference type="PROSITE" id="PS00464">
    <property type="entry name" value="RIBOSOMAL_L22"/>
    <property type="match status" value="1"/>
</dbReference>
<protein>
    <recommendedName>
        <fullName evidence="2">Large ribosomal subunit protein uL22c</fullName>
    </recommendedName>
    <alternativeName>
        <fullName>50S ribosomal protein L22, chloroplastic</fullName>
    </alternativeName>
</protein>
<reference key="1">
    <citation type="submission" date="2007-03" db="EMBL/GenBank/DDBJ databases">
        <title>Sequence analysis of Arabidopsis pumila JS2 chloroplast DNA.</title>
        <authorList>
            <person name="Hosouchi T."/>
            <person name="Tsuruoka H."/>
            <person name="Kotani H."/>
        </authorList>
    </citation>
    <scope>NUCLEOTIDE SEQUENCE [LARGE SCALE GENOMIC DNA]</scope>
</reference>
<keyword id="KW-0150">Chloroplast</keyword>
<keyword id="KW-0934">Plastid</keyword>
<keyword id="KW-0687">Ribonucleoprotein</keyword>
<keyword id="KW-0689">Ribosomal protein</keyword>
<keyword id="KW-0694">RNA-binding</keyword>
<keyword id="KW-0699">rRNA-binding</keyword>
<comment type="function">
    <text evidence="1">This protein binds specifically to 23S rRNA.</text>
</comment>
<comment type="function">
    <text evidence="1">The globular domain of the protein is located near the polypeptide exit tunnel on the outside of the subunit, while an extended beta-hairpin is found that lines the wall of the exit tunnel in the center of the 70S ribosome.</text>
</comment>
<comment type="subunit">
    <text evidence="1">Part of the 50S ribosomal subunit.</text>
</comment>
<comment type="subcellular location">
    <subcellularLocation>
        <location>Plastid</location>
        <location>Chloroplast</location>
    </subcellularLocation>
</comment>
<comment type="similarity">
    <text evidence="2">Belongs to the universal ribosomal protein uL22 family.</text>
</comment>
<feature type="chain" id="PRO_0000354590" description="Large ribosomal subunit protein uL22c">
    <location>
        <begin position="1"/>
        <end position="160"/>
    </location>
</feature>
<gene>
    <name type="primary">rpl22</name>
</gene>
<sequence length="160" mass="18614">MIKKRKKKSYTSVYALGQYISMSAHKARRVIDQIRGRSYEEALMILELMPYRGCYPIFKLVYSAAANASHNKGFKETNLVISKAEVNQGNTVKKLKPRARGRSYPIKRSTCHITIVLEDISFYQQYEEYLMYLKKPGCRNENRNLTCYDTYSSGGLWDKK</sequence>
<geneLocation type="chloroplast"/>
<name>RK22_OLIPU</name>
<organism>
    <name type="scientific">Olimarabidopsis pumila</name>
    <name type="common">Dwarf rocket</name>
    <name type="synonym">Arabidopsis griffithiana</name>
    <dbReference type="NCBI Taxonomy" id="74718"/>
    <lineage>
        <taxon>Eukaryota</taxon>
        <taxon>Viridiplantae</taxon>
        <taxon>Streptophyta</taxon>
        <taxon>Embryophyta</taxon>
        <taxon>Tracheophyta</taxon>
        <taxon>Spermatophyta</taxon>
        <taxon>Magnoliopsida</taxon>
        <taxon>eudicotyledons</taxon>
        <taxon>Gunneridae</taxon>
        <taxon>Pentapetalae</taxon>
        <taxon>rosids</taxon>
        <taxon>malvids</taxon>
        <taxon>Brassicales</taxon>
        <taxon>Brassicaceae</taxon>
        <taxon>Alyssopsideae</taxon>
        <taxon>Olimarabidopsis</taxon>
    </lineage>
</organism>
<accession>A4QJX0</accession>